<sequence length="411" mass="44865">MPSVLWVLFDGGADRPVGRKTPFYVAFKPTIDYLSSLGSCGMLDPISPGIRPGSDTAHLALFGYDPYKYYTGRGAFEALGADVALKPGDVAFRTNLATVDEAGVVIDRRAGRYIAPEEARSVEEVINKIGEEIGKKYGVDVFYKSTVEHRGVLVIRGPVSHRVSDTDPHRVGAKILRSEPLERSKEAALTAEVVNEITLRFMEISKELEINKARRLQGKLPINAILLRGGGYMPQIEPIREKYNIRAAAIAGVALIRGVARAVGMDVYTAPGLGGTKDDVFDQAVKLAVELMSKYDVVFLHVKGTDSTSHDGDFNGKVSVIERLDKALAPYLDKLLNNYFVVTSDHATPVSVKEHTGEPVPILLYGPDVVQDDVSKFSELTCWRGALGRIRGIDVMPILGSYLGLTEKFGE</sequence>
<reference key="1">
    <citation type="journal article" date="2002" name="Proc. Natl. Acad. Sci. U.S.A.">
        <title>Genome sequence of the hyperthermophilic crenarchaeon Pyrobaculum aerophilum.</title>
        <authorList>
            <person name="Fitz-Gibbon S.T."/>
            <person name="Ladner H."/>
            <person name="Kim U.-J."/>
            <person name="Stetter K.O."/>
            <person name="Simon M.I."/>
            <person name="Miller J.H."/>
        </authorList>
    </citation>
    <scope>NUCLEOTIDE SEQUENCE [LARGE SCALE GENOMIC DNA]</scope>
    <source>
        <strain>ATCC 51768 / DSM 7523 / JCM 9630 / CIP 104966 / NBRC 100827 / IM2</strain>
    </source>
</reference>
<proteinExistence type="inferred from homology"/>
<keyword id="KW-0324">Glycolysis</keyword>
<keyword id="KW-0413">Isomerase</keyword>
<keyword id="KW-1185">Reference proteome</keyword>
<organism>
    <name type="scientific">Pyrobaculum aerophilum (strain ATCC 51768 / DSM 7523 / JCM 9630 / CIP 104966 / NBRC 100827 / IM2)</name>
    <dbReference type="NCBI Taxonomy" id="178306"/>
    <lineage>
        <taxon>Archaea</taxon>
        <taxon>Thermoproteota</taxon>
        <taxon>Thermoprotei</taxon>
        <taxon>Thermoproteales</taxon>
        <taxon>Thermoproteaceae</taxon>
        <taxon>Pyrobaculum</taxon>
    </lineage>
</organism>
<dbReference type="EC" id="5.4.2.12" evidence="1"/>
<dbReference type="EMBL" id="AE009441">
    <property type="protein sequence ID" value="AAL64112.1"/>
    <property type="molecule type" value="Genomic_DNA"/>
</dbReference>
<dbReference type="RefSeq" id="WP_011008580.1">
    <property type="nucleotide sequence ID" value="NC_003364.1"/>
</dbReference>
<dbReference type="SMR" id="Q8ZVE4"/>
<dbReference type="FunCoup" id="Q8ZVE4">
    <property type="interactions" value="144"/>
</dbReference>
<dbReference type="STRING" id="178306.PAE2326"/>
<dbReference type="EnsemblBacteria" id="AAL64112">
    <property type="protein sequence ID" value="AAL64112"/>
    <property type="gene ID" value="PAE2326"/>
</dbReference>
<dbReference type="GeneID" id="1464448"/>
<dbReference type="KEGG" id="pai:PAE2326"/>
<dbReference type="PATRIC" id="fig|178306.9.peg.1733"/>
<dbReference type="eggNOG" id="arCOG01696">
    <property type="taxonomic scope" value="Archaea"/>
</dbReference>
<dbReference type="HOGENOM" id="CLU_034906_2_0_2"/>
<dbReference type="InParanoid" id="Q8ZVE4"/>
<dbReference type="UniPathway" id="UPA00109">
    <property type="reaction ID" value="UER00186"/>
</dbReference>
<dbReference type="Proteomes" id="UP000002439">
    <property type="component" value="Chromosome"/>
</dbReference>
<dbReference type="GO" id="GO:0046872">
    <property type="term" value="F:metal ion binding"/>
    <property type="evidence" value="ECO:0007669"/>
    <property type="project" value="InterPro"/>
</dbReference>
<dbReference type="GO" id="GO:0004619">
    <property type="term" value="F:phosphoglycerate mutase activity"/>
    <property type="evidence" value="ECO:0007669"/>
    <property type="project" value="UniProtKB-EC"/>
</dbReference>
<dbReference type="GO" id="GO:0006096">
    <property type="term" value="P:glycolytic process"/>
    <property type="evidence" value="ECO:0007669"/>
    <property type="project" value="UniProtKB-UniRule"/>
</dbReference>
<dbReference type="CDD" id="cd16011">
    <property type="entry name" value="iPGM_like"/>
    <property type="match status" value="1"/>
</dbReference>
<dbReference type="Gene3D" id="3.40.720.10">
    <property type="entry name" value="Alkaline Phosphatase, subunit A"/>
    <property type="match status" value="1"/>
</dbReference>
<dbReference type="Gene3D" id="3.30.70.2130">
    <property type="entry name" value="Metalloenzyme domain"/>
    <property type="match status" value="1"/>
</dbReference>
<dbReference type="HAMAP" id="MF_01402_A">
    <property type="entry name" value="ApgM_A"/>
    <property type="match status" value="1"/>
</dbReference>
<dbReference type="InterPro" id="IPR017850">
    <property type="entry name" value="Alkaline_phosphatase_core_sf"/>
</dbReference>
<dbReference type="InterPro" id="IPR023665">
    <property type="entry name" value="ApgAM_prokaryotes"/>
</dbReference>
<dbReference type="InterPro" id="IPR006124">
    <property type="entry name" value="Metalloenzyme"/>
</dbReference>
<dbReference type="InterPro" id="IPR004456">
    <property type="entry name" value="Pglycerate_mutase_ApgM"/>
</dbReference>
<dbReference type="InterPro" id="IPR042253">
    <property type="entry name" value="Pglycerate_mutase_ApgM_sf"/>
</dbReference>
<dbReference type="NCBIfam" id="TIGR00306">
    <property type="entry name" value="apgM"/>
    <property type="match status" value="1"/>
</dbReference>
<dbReference type="NCBIfam" id="NF003104">
    <property type="entry name" value="PRK04024.1"/>
    <property type="match status" value="1"/>
</dbReference>
<dbReference type="PANTHER" id="PTHR31209">
    <property type="entry name" value="COFACTOR-INDEPENDENT PHOSPHOGLYCERATE MUTASE"/>
    <property type="match status" value="1"/>
</dbReference>
<dbReference type="PANTHER" id="PTHR31209:SF0">
    <property type="entry name" value="METALLOENZYME DOMAIN-CONTAINING PROTEIN"/>
    <property type="match status" value="1"/>
</dbReference>
<dbReference type="Pfam" id="PF01676">
    <property type="entry name" value="Metalloenzyme"/>
    <property type="match status" value="1"/>
</dbReference>
<dbReference type="Pfam" id="PF10143">
    <property type="entry name" value="PhosphMutase"/>
    <property type="match status" value="1"/>
</dbReference>
<dbReference type="PIRSF" id="PIRSF006392">
    <property type="entry name" value="IPGAM_arch"/>
    <property type="match status" value="1"/>
</dbReference>
<dbReference type="SUPFAM" id="SSF53649">
    <property type="entry name" value="Alkaline phosphatase-like"/>
    <property type="match status" value="1"/>
</dbReference>
<evidence type="ECO:0000255" key="1">
    <source>
        <dbReference type="HAMAP-Rule" id="MF_01402"/>
    </source>
</evidence>
<feature type="chain" id="PRO_0000138143" description="2,3-bisphosphoglycerate-independent phosphoglycerate mutase">
    <location>
        <begin position="1"/>
        <end position="411"/>
    </location>
</feature>
<name>APGM_PYRAE</name>
<gene>
    <name evidence="1" type="primary">apgM</name>
    <name type="ordered locus">PAE2326</name>
</gene>
<protein>
    <recommendedName>
        <fullName evidence="1">2,3-bisphosphoglycerate-independent phosphoglycerate mutase</fullName>
        <shortName evidence="1">BPG-independent PGAM</shortName>
        <shortName evidence="1">Phosphoglyceromutase</shortName>
        <shortName evidence="1">aPGAM</shortName>
        <ecNumber evidence="1">5.4.2.12</ecNumber>
    </recommendedName>
</protein>
<accession>Q8ZVE4</accession>
<comment type="function">
    <text evidence="1">Catalyzes the interconversion of 2-phosphoglycerate and 3-phosphoglycerate.</text>
</comment>
<comment type="catalytic activity">
    <reaction evidence="1">
        <text>(2R)-2-phosphoglycerate = (2R)-3-phosphoglycerate</text>
        <dbReference type="Rhea" id="RHEA:15901"/>
        <dbReference type="ChEBI" id="CHEBI:58272"/>
        <dbReference type="ChEBI" id="CHEBI:58289"/>
        <dbReference type="EC" id="5.4.2.12"/>
    </reaction>
</comment>
<comment type="pathway">
    <text evidence="1">Carbohydrate degradation; glycolysis; pyruvate from D-glyceraldehyde 3-phosphate: step 3/5.</text>
</comment>
<comment type="similarity">
    <text evidence="1">Belongs to the BPG-independent phosphoglycerate mutase family. A-PGAM subfamily.</text>
</comment>